<comment type="subcellular location">
    <subcellularLocation>
        <location evidence="1">Cell membrane</location>
        <topology evidence="1">Lipid-anchor</topology>
    </subcellularLocation>
</comment>
<comment type="similarity">
    <text evidence="2">Belongs to the staphylococcal tandem lipoprotein family.</text>
</comment>
<dbReference type="EMBL" id="BA000017">
    <property type="protein sequence ID" value="BAB56260.1"/>
    <property type="molecule type" value="Genomic_DNA"/>
</dbReference>
<dbReference type="SMR" id="Q99XB4"/>
<dbReference type="DNASU" id="1120057"/>
<dbReference type="KEGG" id="sav:SAV0098"/>
<dbReference type="HOGENOM" id="CLU_071589_0_1_9"/>
<dbReference type="PhylomeDB" id="Q99XB4"/>
<dbReference type="Proteomes" id="UP000002481">
    <property type="component" value="Chromosome"/>
</dbReference>
<dbReference type="GO" id="GO:0005886">
    <property type="term" value="C:plasma membrane"/>
    <property type="evidence" value="ECO:0007669"/>
    <property type="project" value="UniProtKB-SubCell"/>
</dbReference>
<dbReference type="Gene3D" id="2.50.20.40">
    <property type="match status" value="1"/>
</dbReference>
<dbReference type="InterPro" id="IPR007595">
    <property type="entry name" value="Csa"/>
</dbReference>
<dbReference type="InterPro" id="IPR038641">
    <property type="entry name" value="Csa_sf"/>
</dbReference>
<dbReference type="NCBIfam" id="TIGR01742">
    <property type="entry name" value="SA_tandem_lipo"/>
    <property type="match status" value="1"/>
</dbReference>
<dbReference type="Pfam" id="PF04507">
    <property type="entry name" value="DUF576"/>
    <property type="match status" value="1"/>
</dbReference>
<dbReference type="PROSITE" id="PS51257">
    <property type="entry name" value="PROKAR_LIPOPROTEIN"/>
    <property type="match status" value="1"/>
</dbReference>
<feature type="signal peptide" evidence="1">
    <location>
        <begin position="1"/>
        <end position="23"/>
    </location>
</feature>
<feature type="chain" id="PRO_0000282115" description="Uncharacterized lipoprotein SAV0098">
    <location>
        <begin position="24"/>
        <end position="255"/>
    </location>
</feature>
<feature type="lipid moiety-binding region" description="N-palmitoyl cysteine" evidence="1">
    <location>
        <position position="24"/>
    </location>
</feature>
<feature type="lipid moiety-binding region" description="S-diacylglycerol cysteine" evidence="1">
    <location>
        <position position="24"/>
    </location>
</feature>
<accession>Q99XB4</accession>
<sequence length="255" mass="29421">MKRLNTLVLYISFLILIISIVAGCGTGKEAEIKKSFEKTLSMYPIKNLEDLYDKEGYRDDEFDKNDKGTWTISSEMAIQKKGEALNIKGMVLKLNRNTRSAKGFYYVNAIKKDENGRPQDKQIEYPVKMIDNKIIPTKDIKDEKIKKEIENFKFFAQYGNFKDLTKYKGGDISYNPEAPIYSAKYQLTNDDYNVKQLRKRYDIPTNKAPKLLLKGSGNLDGSSIGYKKIEFTFVEKKGENTYFTANLHFKPSNDE</sequence>
<keyword id="KW-1003">Cell membrane</keyword>
<keyword id="KW-0449">Lipoprotein</keyword>
<keyword id="KW-0472">Membrane</keyword>
<keyword id="KW-0564">Palmitate</keyword>
<keyword id="KW-0732">Signal</keyword>
<reference key="1">
    <citation type="journal article" date="2001" name="Lancet">
        <title>Whole genome sequencing of meticillin-resistant Staphylococcus aureus.</title>
        <authorList>
            <person name="Kuroda M."/>
            <person name="Ohta T."/>
            <person name="Uchiyama I."/>
            <person name="Baba T."/>
            <person name="Yuzawa H."/>
            <person name="Kobayashi I."/>
            <person name="Cui L."/>
            <person name="Oguchi A."/>
            <person name="Aoki K."/>
            <person name="Nagai Y."/>
            <person name="Lian J.-Q."/>
            <person name="Ito T."/>
            <person name="Kanamori M."/>
            <person name="Matsumaru H."/>
            <person name="Maruyama A."/>
            <person name="Murakami H."/>
            <person name="Hosoyama A."/>
            <person name="Mizutani-Ui Y."/>
            <person name="Takahashi N.K."/>
            <person name="Sawano T."/>
            <person name="Inoue R."/>
            <person name="Kaito C."/>
            <person name="Sekimizu K."/>
            <person name="Hirakawa H."/>
            <person name="Kuhara S."/>
            <person name="Goto S."/>
            <person name="Yabuzaki J."/>
            <person name="Kanehisa M."/>
            <person name="Yamashita A."/>
            <person name="Oshima K."/>
            <person name="Furuya K."/>
            <person name="Yoshino C."/>
            <person name="Shiba T."/>
            <person name="Hattori M."/>
            <person name="Ogasawara N."/>
            <person name="Hayashi H."/>
            <person name="Hiramatsu K."/>
        </authorList>
    </citation>
    <scope>NUCLEOTIDE SEQUENCE [LARGE SCALE GENOMIC DNA]</scope>
    <source>
        <strain>Mu50 / ATCC 700699</strain>
    </source>
</reference>
<gene>
    <name type="ordered locus">SAV0098</name>
</gene>
<evidence type="ECO:0000255" key="1">
    <source>
        <dbReference type="PROSITE-ProRule" id="PRU00303"/>
    </source>
</evidence>
<evidence type="ECO:0000305" key="2"/>
<name>Y098_STAAM</name>
<proteinExistence type="inferred from homology"/>
<organism>
    <name type="scientific">Staphylococcus aureus (strain Mu50 / ATCC 700699)</name>
    <dbReference type="NCBI Taxonomy" id="158878"/>
    <lineage>
        <taxon>Bacteria</taxon>
        <taxon>Bacillati</taxon>
        <taxon>Bacillota</taxon>
        <taxon>Bacilli</taxon>
        <taxon>Bacillales</taxon>
        <taxon>Staphylococcaceae</taxon>
        <taxon>Staphylococcus</taxon>
    </lineage>
</organism>
<protein>
    <recommendedName>
        <fullName>Uncharacterized lipoprotein SAV0098</fullName>
    </recommendedName>
</protein>